<accession>P51029</accession>
<reference key="1">
    <citation type="journal article" date="1995" name="Development">
        <title>Zebrafish wnt8 and wnt8b share a common activity but are involved in distinct developmental pathways.</title>
        <authorList>
            <person name="Kelly G.M."/>
            <person name="Erezyilmaz D.F."/>
            <person name="Greenstein P.E."/>
            <person name="Moon R.T."/>
        </authorList>
    </citation>
    <scope>NUCLEOTIDE SEQUENCE [MRNA]</scope>
</reference>
<reference key="2">
    <citation type="journal article" date="2005" name="Neuron">
        <title>Early stages of zebrafish eye formation require the coordinated activity of Wnt11, Fz5, and the Wnt/beta-catenin pathway.</title>
        <authorList>
            <person name="Cavodeassi F."/>
            <person name="Carreira-Barbosa F."/>
            <person name="Young R.M."/>
            <person name="Concha M.L."/>
            <person name="Allende M.L."/>
            <person name="Houart C."/>
            <person name="Tada M."/>
            <person name="Wilson S.W."/>
        </authorList>
    </citation>
    <scope>FUNCTION</scope>
    <scope>DEVELOPMENTAL STAGE</scope>
</reference>
<comment type="function">
    <text evidence="4 6">Ligand for fzd8a, a member of the G-protein coupled frizzled receptor family (Probable). May play a role in the establishment of polarity in the nervous system. Involved in canonical Wnt signaling pathway. During embryonic development, required for the acquisition of caudal diencephalic fate. Antagonizes eye specification (PubMed:15996547).</text>
</comment>
<comment type="subcellular location">
    <subcellularLocation>
        <location>Secreted</location>
        <location>Extracellular space</location>
        <location>Extracellular matrix</location>
    </subcellularLocation>
</comment>
<comment type="tissue specificity">
    <text>Hindbrain r1, 2 and 5.</text>
</comment>
<comment type="developmental stage">
    <text evidence="4">During gastrulation, expressed in the anterior neural plate, close to the eye field.</text>
</comment>
<comment type="PTM">
    <text evidence="1 2">Palmitoleoylation is required for efficient binding to frizzled receptors (By similarity). Depalmitoleoylation leads to Wnt signaling pathway inhibition (By similarity).</text>
</comment>
<comment type="PTM">
    <text evidence="1">Proteolytic processing by tiki1 and tiki2 promotes oxidation and formation of large disulfide-bond oligomers, leading to inactivation of wnt8b.</text>
</comment>
<comment type="similarity">
    <text evidence="5">Belongs to the Wnt family.</text>
</comment>
<gene>
    <name type="primary">wnt8b</name>
    <name type="synonym">wnt-8b</name>
</gene>
<sequence>MFMHLEVYYYAFILMAHMKTCCGWSVNNFLMTGPKAYLIYSSSVAAGAQSGIEECKYQFAWDRWKCPERALQLSTHSGLRSANRETAFFHAISSAGVMYTLTRNCSLGDFDNCGCDDTRNGQRGGQGWLWGGCSDNVGFGEVISKQFVDALETGQDARAAMNLHNNEVGRKAVKGTMQRTCKCHGVSGSCTTQTCWLQLPEFREVGNYLKEKYHRAVKVDLLRGAGNSAASRGAIAETFNSISRKELVHLEDSPDYCLENRTLGLPGTEGRECLRKGKNLSKWEKRTCKRLCGDCGLAVEERRAETVSSCNCKFHWCCAVKCEQCRKTVTKYYCVKRSKRVKNDNASRRKSYRLKKKH</sequence>
<organism>
    <name type="scientific">Danio rerio</name>
    <name type="common">Zebrafish</name>
    <name type="synonym">Brachydanio rerio</name>
    <dbReference type="NCBI Taxonomy" id="7955"/>
    <lineage>
        <taxon>Eukaryota</taxon>
        <taxon>Metazoa</taxon>
        <taxon>Chordata</taxon>
        <taxon>Craniata</taxon>
        <taxon>Vertebrata</taxon>
        <taxon>Euteleostomi</taxon>
        <taxon>Actinopterygii</taxon>
        <taxon>Neopterygii</taxon>
        <taxon>Teleostei</taxon>
        <taxon>Ostariophysi</taxon>
        <taxon>Cypriniformes</taxon>
        <taxon>Danionidae</taxon>
        <taxon>Danioninae</taxon>
        <taxon>Danio</taxon>
    </lineage>
</organism>
<feature type="signal peptide" evidence="3">
    <location>
        <begin position="1"/>
        <end position="23"/>
    </location>
</feature>
<feature type="chain" id="PRO_0000041452" description="Protein Wnt-8b">
    <location>
        <begin position="24"/>
        <end position="358"/>
    </location>
</feature>
<feature type="lipid moiety-binding region" description="O-palmitoleoyl serine" evidence="1">
    <location>
        <position position="187"/>
    </location>
</feature>
<feature type="glycosylation site" description="N-linked (GlcNAc...) asparagine" evidence="3">
    <location>
        <position position="104"/>
    </location>
</feature>
<feature type="glycosylation site" description="N-linked (GlcNAc...) asparagine" evidence="3">
    <location>
        <position position="260"/>
    </location>
</feature>
<feature type="glycosylation site" description="N-linked (GlcNAc...) asparagine" evidence="3">
    <location>
        <position position="279"/>
    </location>
</feature>
<feature type="glycosylation site" description="N-linked (GlcNAc...) asparagine" evidence="3">
    <location>
        <position position="345"/>
    </location>
</feature>
<feature type="disulfide bond" evidence="1">
    <location>
        <begin position="55"/>
        <end position="66"/>
    </location>
</feature>
<feature type="disulfide bond" evidence="1">
    <location>
        <begin position="105"/>
        <end position="113"/>
    </location>
</feature>
<feature type="disulfide bond" evidence="1">
    <location>
        <begin position="115"/>
        <end position="133"/>
    </location>
</feature>
<feature type="disulfide bond" evidence="1">
    <location>
        <begin position="181"/>
        <end position="195"/>
    </location>
</feature>
<feature type="disulfide bond" evidence="1">
    <location>
        <begin position="183"/>
        <end position="190"/>
    </location>
</feature>
<feature type="disulfide bond" evidence="1">
    <location>
        <begin position="257"/>
        <end position="295"/>
    </location>
</feature>
<feature type="disulfide bond" evidence="1">
    <location>
        <begin position="273"/>
        <end position="288"/>
    </location>
</feature>
<feature type="disulfide bond" evidence="1">
    <location>
        <begin position="292"/>
        <end position="334"/>
    </location>
</feature>
<feature type="disulfide bond" evidence="1">
    <location>
        <begin position="310"/>
        <end position="325"/>
    </location>
</feature>
<feature type="disulfide bond" evidence="1">
    <location>
        <begin position="312"/>
        <end position="322"/>
    </location>
</feature>
<feature type="disulfide bond" evidence="1">
    <location>
        <begin position="317"/>
        <end position="318"/>
    </location>
</feature>
<protein>
    <recommendedName>
        <fullName>Protein Wnt-8b</fullName>
    </recommendedName>
</protein>
<keyword id="KW-0217">Developmental protein</keyword>
<keyword id="KW-1015">Disulfide bond</keyword>
<keyword id="KW-0272">Extracellular matrix</keyword>
<keyword id="KW-0325">Glycoprotein</keyword>
<keyword id="KW-0449">Lipoprotein</keyword>
<keyword id="KW-1185">Reference proteome</keyword>
<keyword id="KW-0964">Secreted</keyword>
<keyword id="KW-0732">Signal</keyword>
<keyword id="KW-0879">Wnt signaling pathway</keyword>
<evidence type="ECO:0000250" key="1">
    <source>
        <dbReference type="UniProtKB" id="P28026"/>
    </source>
</evidence>
<evidence type="ECO:0000250" key="2">
    <source>
        <dbReference type="UniProtKB" id="P56704"/>
    </source>
</evidence>
<evidence type="ECO:0000255" key="3"/>
<evidence type="ECO:0000269" key="4">
    <source>
    </source>
</evidence>
<evidence type="ECO:0000305" key="5"/>
<evidence type="ECO:0000305" key="6">
    <source>
    </source>
</evidence>
<name>WNT8B_DANRE</name>
<proteinExistence type="evidence at transcript level"/>
<dbReference type="EMBL" id="U10870">
    <property type="protein sequence ID" value="AAC59698.1"/>
    <property type="molecule type" value="mRNA"/>
</dbReference>
<dbReference type="PIR" id="I50506">
    <property type="entry name" value="I50506"/>
</dbReference>
<dbReference type="RefSeq" id="NP_571034.1">
    <property type="nucleotide sequence ID" value="NM_130959.2"/>
</dbReference>
<dbReference type="SMR" id="P51029"/>
<dbReference type="BioGRID" id="78377">
    <property type="interactions" value="2"/>
</dbReference>
<dbReference type="FunCoup" id="P51029">
    <property type="interactions" value="1608"/>
</dbReference>
<dbReference type="STRING" id="7955.ENSDARP00000049623"/>
<dbReference type="GlyCosmos" id="P51029">
    <property type="glycosylation" value="4 sites, No reported glycans"/>
</dbReference>
<dbReference type="PaxDb" id="7955-ENSDARP00000049623"/>
<dbReference type="GeneID" id="30144"/>
<dbReference type="KEGG" id="dre:30144"/>
<dbReference type="AGR" id="ZFIN:ZDB-GENE-990415-279"/>
<dbReference type="CTD" id="7479"/>
<dbReference type="ZFIN" id="ZDB-GENE-990415-279">
    <property type="gene designation" value="wnt8b"/>
</dbReference>
<dbReference type="eggNOG" id="KOG3913">
    <property type="taxonomic scope" value="Eukaryota"/>
</dbReference>
<dbReference type="InParanoid" id="P51029"/>
<dbReference type="OrthoDB" id="5945655at2759"/>
<dbReference type="PhylomeDB" id="P51029"/>
<dbReference type="Reactome" id="R-DRE-3238698">
    <property type="pathway name" value="WNT ligand biogenesis and trafficking"/>
</dbReference>
<dbReference type="Reactome" id="R-DRE-4641262">
    <property type="pathway name" value="Disassembly of the destruction complex and recruitment of AXIN to the membrane"/>
</dbReference>
<dbReference type="SignaLink" id="P51029"/>
<dbReference type="PRO" id="PR:P51029"/>
<dbReference type="Proteomes" id="UP000000437">
    <property type="component" value="Chromosome 13"/>
</dbReference>
<dbReference type="GO" id="GO:0005615">
    <property type="term" value="C:extracellular space"/>
    <property type="evidence" value="ECO:0000318"/>
    <property type="project" value="GO_Central"/>
</dbReference>
<dbReference type="GO" id="GO:0005125">
    <property type="term" value="F:cytokine activity"/>
    <property type="evidence" value="ECO:0000318"/>
    <property type="project" value="GO_Central"/>
</dbReference>
<dbReference type="GO" id="GO:0005109">
    <property type="term" value="F:frizzled binding"/>
    <property type="evidence" value="ECO:0000318"/>
    <property type="project" value="GO_Central"/>
</dbReference>
<dbReference type="GO" id="GO:0060070">
    <property type="term" value="P:canonical Wnt signaling pathway"/>
    <property type="evidence" value="ECO:0000316"/>
    <property type="project" value="ZFIN"/>
</dbReference>
<dbReference type="GO" id="GO:0045165">
    <property type="term" value="P:cell fate commitment"/>
    <property type="evidence" value="ECO:0000318"/>
    <property type="project" value="GO_Central"/>
</dbReference>
<dbReference type="GO" id="GO:0071679">
    <property type="term" value="P:commissural neuron axon guidance"/>
    <property type="evidence" value="ECO:0000315"/>
    <property type="project" value="ZFIN"/>
</dbReference>
<dbReference type="GO" id="GO:0009880">
    <property type="term" value="P:embryonic pattern specification"/>
    <property type="evidence" value="ECO:0000316"/>
    <property type="project" value="ZFIN"/>
</dbReference>
<dbReference type="GO" id="GO:0001654">
    <property type="term" value="P:eye development"/>
    <property type="evidence" value="ECO:0000314"/>
    <property type="project" value="ZFIN"/>
</dbReference>
<dbReference type="GO" id="GO:0060898">
    <property type="term" value="P:eye field cell fate commitment involved in camera-type eye formation"/>
    <property type="evidence" value="ECO:0000316"/>
    <property type="project" value="ZFIN"/>
</dbReference>
<dbReference type="GO" id="GO:0030900">
    <property type="term" value="P:forebrain development"/>
    <property type="evidence" value="ECO:0000314"/>
    <property type="project" value="ZFIN"/>
</dbReference>
<dbReference type="GO" id="GO:0021879">
    <property type="term" value="P:forebrain neuron differentiation"/>
    <property type="evidence" value="ECO:0000315"/>
    <property type="project" value="ZFIN"/>
</dbReference>
<dbReference type="GO" id="GO:0021854">
    <property type="term" value="P:hypothalamus development"/>
    <property type="evidence" value="ECO:0000315"/>
    <property type="project" value="ZFIN"/>
</dbReference>
<dbReference type="GO" id="GO:0030182">
    <property type="term" value="P:neuron differentiation"/>
    <property type="evidence" value="ECO:0000318"/>
    <property type="project" value="GO_Central"/>
</dbReference>
<dbReference type="GO" id="GO:0043049">
    <property type="term" value="P:otic placode formation"/>
    <property type="evidence" value="ECO:0000315"/>
    <property type="project" value="ZFIN"/>
</dbReference>
<dbReference type="GO" id="GO:0070654">
    <property type="term" value="P:sensory epithelium regeneration"/>
    <property type="evidence" value="ECO:0000270"/>
    <property type="project" value="ZFIN"/>
</dbReference>
<dbReference type="GO" id="GO:0016055">
    <property type="term" value="P:Wnt signaling pathway"/>
    <property type="evidence" value="ECO:0000315"/>
    <property type="project" value="ZFIN"/>
</dbReference>
<dbReference type="CDD" id="cd19352">
    <property type="entry name" value="Wnt_Wnt8b"/>
    <property type="match status" value="1"/>
</dbReference>
<dbReference type="FunFam" id="3.30.2460.20:FF:000003">
    <property type="entry name" value="Protein Wnt"/>
    <property type="match status" value="1"/>
</dbReference>
<dbReference type="Gene3D" id="3.30.2460.20">
    <property type="match status" value="1"/>
</dbReference>
<dbReference type="InterPro" id="IPR005817">
    <property type="entry name" value="Wnt"/>
</dbReference>
<dbReference type="InterPro" id="IPR013301">
    <property type="entry name" value="Wnt8"/>
</dbReference>
<dbReference type="InterPro" id="IPR043158">
    <property type="entry name" value="Wnt_C"/>
</dbReference>
<dbReference type="InterPro" id="IPR018161">
    <property type="entry name" value="Wnt_CS"/>
</dbReference>
<dbReference type="PANTHER" id="PTHR12027:SF94">
    <property type="entry name" value="PROTEIN WNT-8B"/>
    <property type="match status" value="1"/>
</dbReference>
<dbReference type="PANTHER" id="PTHR12027">
    <property type="entry name" value="WNT RELATED"/>
    <property type="match status" value="1"/>
</dbReference>
<dbReference type="Pfam" id="PF00110">
    <property type="entry name" value="wnt"/>
    <property type="match status" value="1"/>
</dbReference>
<dbReference type="PRINTS" id="PR01892">
    <property type="entry name" value="WNT8PROTEIN"/>
</dbReference>
<dbReference type="PRINTS" id="PR01349">
    <property type="entry name" value="WNTPROTEIN"/>
</dbReference>
<dbReference type="SMART" id="SM00097">
    <property type="entry name" value="WNT1"/>
    <property type="match status" value="1"/>
</dbReference>
<dbReference type="PROSITE" id="PS00246">
    <property type="entry name" value="WNT1"/>
    <property type="match status" value="1"/>
</dbReference>